<evidence type="ECO:0000250" key="1">
    <source>
        <dbReference type="UniProtKB" id="Q5BJS0"/>
    </source>
</evidence>
<evidence type="ECO:0000250" key="2">
    <source>
        <dbReference type="UniProtKB" id="Q99PU8"/>
    </source>
</evidence>
<evidence type="ECO:0000255" key="3">
    <source>
        <dbReference type="PROSITE-ProRule" id="PRU00541"/>
    </source>
</evidence>
<evidence type="ECO:0000255" key="4">
    <source>
        <dbReference type="PROSITE-ProRule" id="PRU00542"/>
    </source>
</evidence>
<evidence type="ECO:0000256" key="5">
    <source>
        <dbReference type="SAM" id="MobiDB-lite"/>
    </source>
</evidence>
<evidence type="ECO:0000269" key="6">
    <source>
    </source>
</evidence>
<evidence type="ECO:0000269" key="7">
    <source>
    </source>
</evidence>
<evidence type="ECO:0000269" key="8">
    <source>
    </source>
</evidence>
<evidence type="ECO:0000269" key="9">
    <source>
    </source>
</evidence>
<evidence type="ECO:0000269" key="10">
    <source>
    </source>
</evidence>
<evidence type="ECO:0000269" key="11">
    <source>
    </source>
</evidence>
<evidence type="ECO:0000303" key="12">
    <source>
    </source>
</evidence>
<evidence type="ECO:0000303" key="13">
    <source>
    </source>
</evidence>
<evidence type="ECO:0000305" key="14"/>
<evidence type="ECO:0007744" key="15">
    <source>
    </source>
</evidence>
<evidence type="ECO:0007744" key="16">
    <source>
    </source>
</evidence>
<evidence type="ECO:0007829" key="17">
    <source>
        <dbReference type="PDB" id="2DB2"/>
    </source>
</evidence>
<comment type="function">
    <text evidence="1 2 8 9 11">RNA-dependent helicase (PubMed:29100085). Plays an important role in the assembly of the mitochondrial large ribosomal subunit (PubMed:25683715, PubMed:29100085). Required for optimal function of the zinc-finger antiviral protein ZC3HAV1 (By similarity). Associates with mitochondrial DNA (PubMed:18063578). Involved in nervous system development and differentiation through its involvement in the up-regulation of a number of genes which are required for neurogenesis, including GSC, NCAM1, neurogenin, and NEUROD (By similarity).</text>
</comment>
<comment type="catalytic activity">
    <reaction evidence="11">
        <text>ATP + H2O = ADP + phosphate + H(+)</text>
        <dbReference type="Rhea" id="RHEA:13065"/>
        <dbReference type="ChEBI" id="CHEBI:15377"/>
        <dbReference type="ChEBI" id="CHEBI:15378"/>
        <dbReference type="ChEBI" id="CHEBI:30616"/>
        <dbReference type="ChEBI" id="CHEBI:43474"/>
        <dbReference type="ChEBI" id="CHEBI:456216"/>
        <dbReference type="EC" id="3.6.4.13"/>
    </reaction>
</comment>
<comment type="subunit">
    <text evidence="1 6 7 9">Identified in a complex with TFAM and SSBP1. Interacts with AGO1 and AGO2. Interacts (via N-terminus) with ZC3HAV1 (via N-terminal domain) in an RNA-independent manner (By similarity). Found in a complex with GRSF1, DDX28, FASTKD2 and FASTKD5 (PubMed:25683715).</text>
</comment>
<comment type="interaction">
    <interactant intactId="EBI-1211456">
        <id>Q7L2E3</id>
    </interactant>
    <interactant intactId="EBI-349854">
        <id>P13569</id>
        <label>CFTR</label>
    </interactant>
    <organismsDiffer>false</organismsDiffer>
    <experiments>5</experiments>
</comment>
<comment type="interaction">
    <interactant intactId="EBI-1211456">
        <id>Q7L2E3</id>
    </interactant>
    <interactant intactId="EBI-744193">
        <id>Q96C10</id>
        <label>DHX58</label>
    </interactant>
    <organismsDiffer>false</organismsDiffer>
    <experiments>2</experiments>
</comment>
<comment type="interaction">
    <interactant intactId="EBI-1211456">
        <id>Q7L2E3</id>
    </interactant>
    <interactant intactId="EBI-640775">
        <id>P19525</id>
        <label>EIF2AK2</label>
    </interactant>
    <organismsDiffer>false</organismsDiffer>
    <experiments>4</experiments>
</comment>
<comment type="interaction">
    <interactant intactId="EBI-1211456">
        <id>Q7L2E3</id>
    </interactant>
    <interactant intactId="EBI-5327611">
        <id>P16401</id>
        <label>H1-5</label>
    </interactant>
    <organismsDiffer>false</organismsDiffer>
    <experiments>2</experiments>
</comment>
<comment type="interaction">
    <interactant intactId="EBI-1211456">
        <id>Q7L2E3</id>
    </interactant>
    <interactant intactId="EBI-6115729">
        <id>Q9Y6K5</id>
        <label>OAS3</label>
    </interactant>
    <organismsDiffer>false</organismsDiffer>
    <experiments>2</experiments>
</comment>
<comment type="subcellular location">
    <subcellularLocation>
        <location evidence="11">Cytoplasm</location>
    </subcellularLocation>
    <subcellularLocation>
        <location evidence="6 11">Mitochondrion</location>
    </subcellularLocation>
    <subcellularLocation>
        <location evidence="6 8 9">Mitochondrion matrix</location>
        <location evidence="6 8 9">Mitochondrion nucleoid</location>
    </subcellularLocation>
    <text evidence="6 9 11">Localizes to mitochondrial RNA granules found in close proximity to the mitochondrial nucleoids (PubMed:16825194, PubMed:25683715). Relocalizes to stress granules upon heat stress (PubMed:29100085).</text>
</comment>
<comment type="alternative products">
    <event type="alternative splicing"/>
    <isoform>
        <id>Q7L2E3-1</id>
        <name>1</name>
        <sequence type="displayed"/>
    </isoform>
    <isoform>
        <id>Q7L2E3-2</id>
        <name>2</name>
        <sequence type="described" ref="VSP_022118"/>
    </isoform>
    <isoform>
        <id>Q7L2E3-3</id>
        <name>3</name>
        <sequence type="described" ref="VSP_036891 VSP_036892"/>
    </isoform>
    <text>Additional isoforms seem to exist.</text>
</comment>
<comment type="PTM">
    <molecule>Isoform 2</molecule>
    <text evidence="15">Phosphorylated on Ser-15.</text>
</comment>
<comment type="disease" evidence="10 11">
    <disease id="DI-05162">
        <name>Neurodevelopmental disorder with variable motor and language impairment</name>
        <acronym>NEDMIAL</acronym>
        <description>An autosomal dominant neurodevelopmental disorder characterized by global developmental delay, intellectual disability, speech impairment and gait abnormalities.</description>
        <dbReference type="MIM" id="617804"/>
    </disease>
    <text>The disease is caused by variants affecting the gene represented in this entry.</text>
</comment>
<comment type="similarity">
    <text evidence="14">Belongs to the DEAD box helicase family. DEAH subfamily.</text>
</comment>
<comment type="sequence caution" evidence="14">
    <conflict type="erroneous initiation">
        <sequence resource="EMBL-CDS" id="BAA74913"/>
    </conflict>
    <text>Extended N-terminus.</text>
</comment>
<comment type="sequence caution" evidence="14">
    <conflict type="miscellaneous discrepancy">
        <sequence resource="EMBL-CDS" id="BAA92071"/>
    </conflict>
    <text>Probable cloning artifact.</text>
</comment>
<name>DHX30_HUMAN</name>
<keyword id="KW-0002">3D-structure</keyword>
<keyword id="KW-0025">Alternative splicing</keyword>
<keyword id="KW-0067">ATP-binding</keyword>
<keyword id="KW-0963">Cytoplasm</keyword>
<keyword id="KW-0225">Disease variant</keyword>
<keyword id="KW-0347">Helicase</keyword>
<keyword id="KW-0378">Hydrolase</keyword>
<keyword id="KW-0991">Intellectual disability</keyword>
<keyword id="KW-0496">Mitochondrion</keyword>
<keyword id="KW-1135">Mitochondrion nucleoid</keyword>
<keyword id="KW-0547">Nucleotide-binding</keyword>
<keyword id="KW-0597">Phosphoprotein</keyword>
<keyword id="KW-1267">Proteomics identification</keyword>
<keyword id="KW-1185">Reference proteome</keyword>
<keyword id="KW-0690">Ribosome biogenesis</keyword>
<keyword id="KW-0694">RNA-binding</keyword>
<organism>
    <name type="scientific">Homo sapiens</name>
    <name type="common">Human</name>
    <dbReference type="NCBI Taxonomy" id="9606"/>
    <lineage>
        <taxon>Eukaryota</taxon>
        <taxon>Metazoa</taxon>
        <taxon>Chordata</taxon>
        <taxon>Craniata</taxon>
        <taxon>Vertebrata</taxon>
        <taxon>Euteleostomi</taxon>
        <taxon>Mammalia</taxon>
        <taxon>Eutheria</taxon>
        <taxon>Euarchontoglires</taxon>
        <taxon>Primates</taxon>
        <taxon>Haplorrhini</taxon>
        <taxon>Catarrhini</taxon>
        <taxon>Hominidae</taxon>
        <taxon>Homo</taxon>
    </lineage>
</organism>
<accession>Q7L2E3</accession>
<accession>A8K5F1</accession>
<accession>O94965</accession>
<accession>Q7Z753</accession>
<accession>Q96CH4</accession>
<accession>Q9NUQ0</accession>
<sequence>MFSLDSFRKDRAQHRQRQCKLPPPRLPPMCVNPTPGGTISRASRDLLKEFPQPKNLLNSVIGRALGISHAKDKLVYVHTNGPKKKKVTLHIKWPKSVEVEGYGSKKIDAERQAAAAACQLFKGWGLLGPRNELFDAAKYRVLADRFGSPADSWWRPEPTMPPTSWRQLNPESIRPGGPGGLSRSLGREEEEDEEEELEEGTIDVTDFLSMTQQDSHAPLRDSRGSSFEMTDDDSAIRALTQFPLPKNLLAKVIQIATSSSTAKNLMQFHTVGTKTKLSTLTLLWPCPMTFVAKGRRKAEAENKAAALACKKLKSLGLVDRNNEPLTHAMYNLASLRELGETQRRPCTIQVPEPILRKIETFLNHYPVESSWIAPELRLQSDDILPLGKDSGPLSDPITGKPYVPLLEAEEVRLSQSLLELWRRRGPVWQEAPQLPVDPHRDTILNAIEQHPVVVISGDTGCGKTTRIPQLLLERYVTEGRGARCNVIITQPRRISAVSVAQRVSHELGPSLRRNVGFQVRLESKPPSRGGALLFCTVGILLRKLQSNPSLEGVSHVIVDEVHERDVNTDFLLILLKGLQRLNPALRLVLMSATGDNERFSRYFGGCPVIKVPGFMYPVKEHYLEDILAKLGKHQYLHRHRHHESEDECALDLDLVTDLVLHIDARGEPGGILCFLPGWQEIKGVQQRLQEALGMHESKYLILPVHSNIPMMDQKAIFQQPPVGVRKIVLATNIAETSITINDIVHVVDSGLHKEERYDLKTKVSCLETVWVSRANVIQRRGRAGRCQSGFAYHLFPRSRLEKMVPFQVPEILRTPLENLVLQAKIHMPEKTAVEFLSKAVDSPNIKAVDEAVILLQEIGVLDQREYLTTLGQRLAHISTDPRLAKAIVLAAIFRCLHPLLVVVSCLTRDPFSSSLQNRAEVDKVKALLSHDSGSDHLAFVRAVAGWEEVLRWQDRSSRENYLEENLLYAPSLRFIHGLIKQFSENIYEAFLVGKPSDCTLASAQCNEYSEEEELVKGVLMAGLYPNLIQVRQGKVTRQGKFKPNSVTYRTKSGNILLHKSTINREATRLRSRWLTYFMAVKSNGSVFVRDSSQVHPLAVLLLTDGDVHIRDDGRRATISLSDSDLLRLEGDSRTVRLLKELRRALGRMVERSLRSELAALPPSVQEEHGQLLALLAELLRGPCGSFDVRKTADD</sequence>
<gene>
    <name type="primary">DHX30</name>
    <name type="synonym">DDX30</name>
    <name type="synonym">KIAA0890</name>
</gene>
<dbReference type="EC" id="3.6.4.13" evidence="11"/>
<dbReference type="EMBL" id="AB020697">
    <property type="protein sequence ID" value="BAA74913.2"/>
    <property type="status" value="ALT_INIT"/>
    <property type="molecule type" value="mRNA"/>
</dbReference>
<dbReference type="EMBL" id="AK002076">
    <property type="protein sequence ID" value="BAA92071.1"/>
    <property type="status" value="ALT_SEQ"/>
    <property type="molecule type" value="mRNA"/>
</dbReference>
<dbReference type="EMBL" id="AK291266">
    <property type="protein sequence ID" value="BAF83955.1"/>
    <property type="molecule type" value="mRNA"/>
</dbReference>
<dbReference type="EMBL" id="BC014237">
    <property type="protein sequence ID" value="AAH14237.1"/>
    <property type="molecule type" value="mRNA"/>
</dbReference>
<dbReference type="EMBL" id="BC015029">
    <property type="protein sequence ID" value="AAH15029.1"/>
    <property type="molecule type" value="mRNA"/>
</dbReference>
<dbReference type="EMBL" id="BC020126">
    <property type="protein sequence ID" value="AAH20126.1"/>
    <property type="molecule type" value="mRNA"/>
</dbReference>
<dbReference type="EMBL" id="BC038417">
    <property type="protein sequence ID" value="AAH38417.1"/>
    <property type="molecule type" value="mRNA"/>
</dbReference>
<dbReference type="CCDS" id="CCDS2759.1">
    <molecule id="Q7L2E3-1"/>
</dbReference>
<dbReference type="PIR" id="E56236">
    <property type="entry name" value="E56236"/>
</dbReference>
<dbReference type="RefSeq" id="NP_055781.2">
    <molecule id="Q7L2E3-3"/>
    <property type="nucleotide sequence ID" value="NM_014966.3"/>
</dbReference>
<dbReference type="RefSeq" id="NP_619520.1">
    <molecule id="Q7L2E3-1"/>
    <property type="nucleotide sequence ID" value="NM_138615.3"/>
</dbReference>
<dbReference type="RefSeq" id="XP_011531796.1">
    <molecule id="Q7L2E3-1"/>
    <property type="nucleotide sequence ID" value="XM_011533494.4"/>
</dbReference>
<dbReference type="RefSeq" id="XP_011531797.1">
    <property type="nucleotide sequence ID" value="XM_011533495.1"/>
</dbReference>
<dbReference type="RefSeq" id="XP_016861406.1">
    <property type="nucleotide sequence ID" value="XM_017005917.1"/>
</dbReference>
<dbReference type="RefSeq" id="XP_054201692.1">
    <molecule id="Q7L2E3-1"/>
    <property type="nucleotide sequence ID" value="XM_054345717.1"/>
</dbReference>
<dbReference type="PDB" id="2DB2">
    <property type="method" value="NMR"/>
    <property type="chains" value="A=42-147"/>
</dbReference>
<dbReference type="PDBsum" id="2DB2"/>
<dbReference type="SMR" id="Q7L2E3"/>
<dbReference type="BioGRID" id="116571">
    <property type="interactions" value="558"/>
</dbReference>
<dbReference type="CORUM" id="Q7L2E3"/>
<dbReference type="FunCoup" id="Q7L2E3">
    <property type="interactions" value="3550"/>
</dbReference>
<dbReference type="IntAct" id="Q7L2E3">
    <property type="interactions" value="272"/>
</dbReference>
<dbReference type="MINT" id="Q7L2E3"/>
<dbReference type="STRING" id="9606.ENSP00000405620"/>
<dbReference type="ChEMBL" id="CHEMBL4105814"/>
<dbReference type="CarbonylDB" id="Q7L2E3"/>
<dbReference type="GlyGen" id="Q7L2E3">
    <property type="glycosylation" value="3 sites, 1 O-linked glycan (2 sites)"/>
</dbReference>
<dbReference type="iPTMnet" id="Q7L2E3"/>
<dbReference type="MetOSite" id="Q7L2E3"/>
<dbReference type="PhosphoSitePlus" id="Q7L2E3"/>
<dbReference type="SwissPalm" id="Q7L2E3"/>
<dbReference type="BioMuta" id="DHX30"/>
<dbReference type="DMDM" id="74758997"/>
<dbReference type="jPOST" id="Q7L2E3"/>
<dbReference type="MassIVE" id="Q7L2E3"/>
<dbReference type="PaxDb" id="9606-ENSP00000405620"/>
<dbReference type="PeptideAtlas" id="Q7L2E3"/>
<dbReference type="ProteomicsDB" id="68758">
    <molecule id="Q7L2E3-1"/>
</dbReference>
<dbReference type="ProteomicsDB" id="68759">
    <molecule id="Q7L2E3-2"/>
</dbReference>
<dbReference type="ProteomicsDB" id="68760">
    <molecule id="Q7L2E3-3"/>
</dbReference>
<dbReference type="Pumba" id="Q7L2E3"/>
<dbReference type="Antibodypedia" id="13009">
    <property type="antibodies" value="163 antibodies from 23 providers"/>
</dbReference>
<dbReference type="DNASU" id="22907"/>
<dbReference type="Ensembl" id="ENST00000445061.6">
    <molecule id="Q7L2E3-1"/>
    <property type="protein sequence ID" value="ENSP00000405620.1"/>
    <property type="gene ID" value="ENSG00000132153.15"/>
</dbReference>
<dbReference type="Ensembl" id="ENST00000446256.6">
    <molecule id="Q7L2E3-1"/>
    <property type="protein sequence ID" value="ENSP00000392601.3"/>
    <property type="gene ID" value="ENSG00000132153.15"/>
</dbReference>
<dbReference type="Ensembl" id="ENST00000457607.1">
    <molecule id="Q7L2E3-2"/>
    <property type="protein sequence ID" value="ENSP00000394682.1"/>
    <property type="gene ID" value="ENSG00000132153.15"/>
</dbReference>
<dbReference type="Ensembl" id="ENST00000619982.4">
    <molecule id="Q7L2E3-3"/>
    <property type="protein sequence ID" value="ENSP00000483160.1"/>
    <property type="gene ID" value="ENSG00000132153.15"/>
</dbReference>
<dbReference type="GeneID" id="22907"/>
<dbReference type="KEGG" id="hsa:22907"/>
<dbReference type="MANE-Select" id="ENST00000445061.6">
    <property type="protein sequence ID" value="ENSP00000405620.1"/>
    <property type="RefSeq nucleotide sequence ID" value="NM_138615.3"/>
    <property type="RefSeq protein sequence ID" value="NP_619520.1"/>
</dbReference>
<dbReference type="UCSC" id="uc003cru.4">
    <molecule id="Q7L2E3-1"/>
    <property type="organism name" value="human"/>
</dbReference>
<dbReference type="AGR" id="HGNC:16716"/>
<dbReference type="CTD" id="22907"/>
<dbReference type="DisGeNET" id="22907"/>
<dbReference type="GeneCards" id="DHX30"/>
<dbReference type="HGNC" id="HGNC:16716">
    <property type="gene designation" value="DHX30"/>
</dbReference>
<dbReference type="HPA" id="ENSG00000132153">
    <property type="expression patterns" value="Low tissue specificity"/>
</dbReference>
<dbReference type="MalaCards" id="DHX30"/>
<dbReference type="MIM" id="616423">
    <property type="type" value="gene"/>
</dbReference>
<dbReference type="MIM" id="617804">
    <property type="type" value="phenotype"/>
</dbReference>
<dbReference type="neXtProt" id="NX_Q7L2E3"/>
<dbReference type="OpenTargets" id="ENSG00000132153"/>
<dbReference type="Orphanet" id="647788">
    <property type="disease" value="Neurodevelopmental delay-intellectual disability-ataxia-feeding difficulty syndrome"/>
</dbReference>
<dbReference type="PharmGKB" id="PA27217"/>
<dbReference type="VEuPathDB" id="HostDB:ENSG00000132153"/>
<dbReference type="eggNOG" id="KOG0920">
    <property type="taxonomic scope" value="Eukaryota"/>
</dbReference>
<dbReference type="GeneTree" id="ENSGT00940000158279"/>
<dbReference type="HOGENOM" id="CLU_001832_1_2_1"/>
<dbReference type="InParanoid" id="Q7L2E3"/>
<dbReference type="OMA" id="QYSCTEH"/>
<dbReference type="OrthoDB" id="3363059at2759"/>
<dbReference type="PAN-GO" id="Q7L2E3">
    <property type="GO annotations" value="2 GO annotations based on evolutionary models"/>
</dbReference>
<dbReference type="PhylomeDB" id="Q7L2E3"/>
<dbReference type="TreeFam" id="TF352030"/>
<dbReference type="PathwayCommons" id="Q7L2E3"/>
<dbReference type="SignaLink" id="Q7L2E3"/>
<dbReference type="SIGNOR" id="Q7L2E3"/>
<dbReference type="BioGRID-ORCS" id="22907">
    <property type="hits" value="155 hits in 1168 CRISPR screens"/>
</dbReference>
<dbReference type="CD-CODE" id="232F8A39">
    <property type="entry name" value="P-body"/>
</dbReference>
<dbReference type="CD-CODE" id="5965E019">
    <property type="entry name" value="mtRNA granule"/>
</dbReference>
<dbReference type="CD-CODE" id="DEE660B4">
    <property type="entry name" value="Stress granule"/>
</dbReference>
<dbReference type="CD-CODE" id="FB4E32DD">
    <property type="entry name" value="Presynaptic clusters and postsynaptic densities"/>
</dbReference>
<dbReference type="ChiTaRS" id="DHX30">
    <property type="organism name" value="human"/>
</dbReference>
<dbReference type="EvolutionaryTrace" id="Q7L2E3"/>
<dbReference type="GenomeRNAi" id="22907"/>
<dbReference type="Pharos" id="Q7L2E3">
    <property type="development level" value="Tchem"/>
</dbReference>
<dbReference type="PRO" id="PR:Q7L2E3"/>
<dbReference type="Proteomes" id="UP000005640">
    <property type="component" value="Chromosome 3"/>
</dbReference>
<dbReference type="RNAct" id="Q7L2E3">
    <property type="molecule type" value="protein"/>
</dbReference>
<dbReference type="Bgee" id="ENSG00000132153">
    <property type="expression patterns" value="Expressed in left testis and 175 other cell types or tissues"/>
</dbReference>
<dbReference type="ExpressionAtlas" id="Q7L2E3">
    <property type="expression patterns" value="baseline and differential"/>
</dbReference>
<dbReference type="GO" id="GO:0005737">
    <property type="term" value="C:cytoplasm"/>
    <property type="evidence" value="ECO:0000314"/>
    <property type="project" value="UniProtKB"/>
</dbReference>
<dbReference type="GO" id="GO:0005829">
    <property type="term" value="C:cytosol"/>
    <property type="evidence" value="ECO:0000314"/>
    <property type="project" value="HPA"/>
</dbReference>
<dbReference type="GO" id="GO:0005759">
    <property type="term" value="C:mitochondrial matrix"/>
    <property type="evidence" value="ECO:0000314"/>
    <property type="project" value="FlyBase"/>
</dbReference>
<dbReference type="GO" id="GO:0042645">
    <property type="term" value="C:mitochondrial nucleoid"/>
    <property type="evidence" value="ECO:0000314"/>
    <property type="project" value="UniProtKB"/>
</dbReference>
<dbReference type="GO" id="GO:0005739">
    <property type="term" value="C:mitochondrion"/>
    <property type="evidence" value="ECO:0000314"/>
    <property type="project" value="HPA"/>
</dbReference>
<dbReference type="GO" id="GO:0005634">
    <property type="term" value="C:nucleus"/>
    <property type="evidence" value="ECO:0000318"/>
    <property type="project" value="GO_Central"/>
</dbReference>
<dbReference type="GO" id="GO:0035770">
    <property type="term" value="C:ribonucleoprotein granule"/>
    <property type="evidence" value="ECO:0000314"/>
    <property type="project" value="UniProtKB"/>
</dbReference>
<dbReference type="GO" id="GO:0005524">
    <property type="term" value="F:ATP binding"/>
    <property type="evidence" value="ECO:0007669"/>
    <property type="project" value="UniProtKB-KW"/>
</dbReference>
<dbReference type="GO" id="GO:0016887">
    <property type="term" value="F:ATP hydrolysis activity"/>
    <property type="evidence" value="ECO:0007669"/>
    <property type="project" value="RHEA"/>
</dbReference>
<dbReference type="GO" id="GO:0003682">
    <property type="term" value="F:chromatin binding"/>
    <property type="evidence" value="ECO:0000314"/>
    <property type="project" value="UniProtKB"/>
</dbReference>
<dbReference type="GO" id="GO:0003678">
    <property type="term" value="F:DNA helicase activity"/>
    <property type="evidence" value="ECO:0000318"/>
    <property type="project" value="GO_Central"/>
</dbReference>
<dbReference type="GO" id="GO:0003725">
    <property type="term" value="F:double-stranded RNA binding"/>
    <property type="evidence" value="ECO:0000314"/>
    <property type="project" value="MGI"/>
</dbReference>
<dbReference type="GO" id="GO:0002151">
    <property type="term" value="F:G-quadruplex RNA binding"/>
    <property type="evidence" value="ECO:0000318"/>
    <property type="project" value="GO_Central"/>
</dbReference>
<dbReference type="GO" id="GO:0003723">
    <property type="term" value="F:RNA binding"/>
    <property type="evidence" value="ECO:0000314"/>
    <property type="project" value="UniProtKB"/>
</dbReference>
<dbReference type="GO" id="GO:0003724">
    <property type="term" value="F:RNA helicase activity"/>
    <property type="evidence" value="ECO:0000314"/>
    <property type="project" value="UniProtKB"/>
</dbReference>
<dbReference type="GO" id="GO:0007417">
    <property type="term" value="P:central nervous system development"/>
    <property type="evidence" value="ECO:0000250"/>
    <property type="project" value="UniProtKB"/>
</dbReference>
<dbReference type="GO" id="GO:1902775">
    <property type="term" value="P:mitochondrial large ribosomal subunit assembly"/>
    <property type="evidence" value="ECO:0000315"/>
    <property type="project" value="UniProtKB"/>
</dbReference>
<dbReference type="CDD" id="cd17976">
    <property type="entry name" value="DEXHc_DHX30"/>
    <property type="match status" value="1"/>
</dbReference>
<dbReference type="CDD" id="cd18791">
    <property type="entry name" value="SF2_C_RHA"/>
    <property type="match status" value="1"/>
</dbReference>
<dbReference type="FunFam" id="1.20.120.1080:FF:000004">
    <property type="entry name" value="ATP-dependent RNA helicase DHX30 isoform X1"/>
    <property type="match status" value="1"/>
</dbReference>
<dbReference type="FunFam" id="3.30.160.20:FF:000016">
    <property type="entry name" value="ATP-dependent RNA helicase DHX30 isoform X1"/>
    <property type="match status" value="1"/>
</dbReference>
<dbReference type="FunFam" id="3.30.160.20:FF:000017">
    <property type="entry name" value="ATP-dependent RNA helicase DHX30 isoform X1"/>
    <property type="match status" value="1"/>
</dbReference>
<dbReference type="FunFam" id="3.40.50.300:FF:001703">
    <property type="entry name" value="DExH-box helicase 30"/>
    <property type="match status" value="1"/>
</dbReference>
<dbReference type="FunFam" id="3.40.50.300:FF:000375">
    <property type="entry name" value="Putative ATP-dependent RNA helicase DHX30"/>
    <property type="match status" value="1"/>
</dbReference>
<dbReference type="Gene3D" id="1.20.120.1080">
    <property type="match status" value="1"/>
</dbReference>
<dbReference type="Gene3D" id="3.30.160.20">
    <property type="match status" value="2"/>
</dbReference>
<dbReference type="Gene3D" id="3.40.50.300">
    <property type="entry name" value="P-loop containing nucleotide triphosphate hydrolases"/>
    <property type="match status" value="2"/>
</dbReference>
<dbReference type="InterPro" id="IPR011709">
    <property type="entry name" value="DEAD-box_helicase_OB_fold"/>
</dbReference>
<dbReference type="InterPro" id="IPR011545">
    <property type="entry name" value="DEAD/DEAH_box_helicase_dom"/>
</dbReference>
<dbReference type="InterPro" id="IPR002464">
    <property type="entry name" value="DNA/RNA_helicase_DEAH_CS"/>
</dbReference>
<dbReference type="InterPro" id="IPR056755">
    <property type="entry name" value="DSRM_2"/>
</dbReference>
<dbReference type="InterPro" id="IPR007502">
    <property type="entry name" value="Helicase-assoc_dom"/>
</dbReference>
<dbReference type="InterPro" id="IPR014001">
    <property type="entry name" value="Helicase_ATP-bd"/>
</dbReference>
<dbReference type="InterPro" id="IPR001650">
    <property type="entry name" value="Helicase_C-like"/>
</dbReference>
<dbReference type="InterPro" id="IPR027417">
    <property type="entry name" value="P-loop_NTPase"/>
</dbReference>
<dbReference type="PANTHER" id="PTHR18934">
    <property type="entry name" value="ATP-DEPENDENT RNA HELICASE"/>
    <property type="match status" value="1"/>
</dbReference>
<dbReference type="PANTHER" id="PTHR18934:SF257">
    <property type="entry name" value="ATP-DEPENDENT RNA HELICASE DHX30"/>
    <property type="match status" value="1"/>
</dbReference>
<dbReference type="Pfam" id="PF00270">
    <property type="entry name" value="DEAD"/>
    <property type="match status" value="1"/>
</dbReference>
<dbReference type="Pfam" id="PF24995">
    <property type="entry name" value="DSRM_2"/>
    <property type="match status" value="1"/>
</dbReference>
<dbReference type="Pfam" id="PF21010">
    <property type="entry name" value="HA2_C"/>
    <property type="match status" value="1"/>
</dbReference>
<dbReference type="Pfam" id="PF00271">
    <property type="entry name" value="Helicase_C"/>
    <property type="match status" value="1"/>
</dbReference>
<dbReference type="Pfam" id="PF07717">
    <property type="entry name" value="OB_NTP_bind"/>
    <property type="match status" value="1"/>
</dbReference>
<dbReference type="SMART" id="SM00487">
    <property type="entry name" value="DEXDc"/>
    <property type="match status" value="1"/>
</dbReference>
<dbReference type="SMART" id="SM00847">
    <property type="entry name" value="HA2"/>
    <property type="match status" value="1"/>
</dbReference>
<dbReference type="SMART" id="SM00490">
    <property type="entry name" value="HELICc"/>
    <property type="match status" value="1"/>
</dbReference>
<dbReference type="SUPFAM" id="SSF52540">
    <property type="entry name" value="P-loop containing nucleoside triphosphate hydrolases"/>
    <property type="match status" value="1"/>
</dbReference>
<dbReference type="PROSITE" id="PS00690">
    <property type="entry name" value="DEAH_ATP_HELICASE"/>
    <property type="match status" value="1"/>
</dbReference>
<dbReference type="PROSITE" id="PS51192">
    <property type="entry name" value="HELICASE_ATP_BIND_1"/>
    <property type="match status" value="1"/>
</dbReference>
<dbReference type="PROSITE" id="PS51194">
    <property type="entry name" value="HELICASE_CTER"/>
    <property type="match status" value="1"/>
</dbReference>
<protein>
    <recommendedName>
        <fullName evidence="14">ATP-dependent RNA helicase DHX30</fullName>
        <ecNumber evidence="11">3.6.4.13</ecNumber>
    </recommendedName>
    <alternativeName>
        <fullName>DEAH box protein 30</fullName>
    </alternativeName>
</protein>
<feature type="chain" id="PRO_0000245538" description="ATP-dependent RNA helicase DHX30">
    <location>
        <begin position="1"/>
        <end position="1194"/>
    </location>
</feature>
<feature type="domain" description="DRBM">
    <location>
        <begin position="53"/>
        <end position="121"/>
    </location>
</feature>
<feature type="domain" description="Helicase ATP-binding" evidence="3">
    <location>
        <begin position="444"/>
        <end position="612"/>
    </location>
</feature>
<feature type="domain" description="Helicase C-terminal" evidence="4">
    <location>
        <begin position="654"/>
        <end position="827"/>
    </location>
</feature>
<feature type="region of interest" description="Disordered" evidence="5">
    <location>
        <begin position="1"/>
        <end position="27"/>
    </location>
</feature>
<feature type="region of interest" description="Disordered" evidence="5">
    <location>
        <begin position="150"/>
        <end position="199"/>
    </location>
</feature>
<feature type="short sequence motif" description="DEAH box">
    <location>
        <begin position="559"/>
        <end position="562"/>
    </location>
</feature>
<feature type="compositionally biased region" description="Basic and acidic residues" evidence="5">
    <location>
        <begin position="1"/>
        <end position="10"/>
    </location>
</feature>
<feature type="compositionally biased region" description="Acidic residues" evidence="5">
    <location>
        <begin position="188"/>
        <end position="199"/>
    </location>
</feature>
<feature type="binding site" evidence="3">
    <location>
        <begin position="457"/>
        <end position="464"/>
    </location>
    <ligand>
        <name>ATP</name>
        <dbReference type="ChEBI" id="CHEBI:30616"/>
    </ligand>
</feature>
<feature type="modified residue" description="Phosphoserine" evidence="16">
    <location>
        <position position="6"/>
    </location>
</feature>
<feature type="modified residue" description="Phosphoserine" evidence="2">
    <location>
        <position position="226"/>
    </location>
</feature>
<feature type="modified residue" description="Phosphoserine" evidence="16">
    <location>
        <position position="380"/>
    </location>
</feature>
<feature type="splice variant" id="VSP_022118" description="In isoform 2." evidence="12">
    <original>MFSLDSFRKDRAQHRQRQCKLPPPRLPPMCVNPTPGGTISR</original>
    <variation>MAAARRLMALAAGISPRLQPLGPRAAGRQGRSRGFSSSCAHPDHTKEAAEAESGMAPGGPGEGDGSLVN</variation>
    <location>
        <begin position="1"/>
        <end position="41"/>
    </location>
</feature>
<feature type="splice variant" id="VSP_036891" description="In isoform 3." evidence="12 13">
    <location>
        <begin position="1"/>
        <end position="39"/>
    </location>
</feature>
<feature type="splice variant" id="VSP_036892" description="In isoform 3." evidence="12 13">
    <original>SR</original>
    <variation>MA</variation>
    <location>
        <begin position="40"/>
        <end position="41"/>
    </location>
</feature>
<feature type="sequence variant" id="VAR_080611" description="In NEDMIAL; changed localization to stress granules; decreased RNA-binding; no effect on RNA-dependent ATPase activity; by inducing the formation of stress granules probably indirectly decreases global protein synthesis; dbSNP:rs1057519436." evidence="10 11">
    <original>R</original>
    <variation>H</variation>
    <location>
        <position position="493"/>
    </location>
</feature>
<feature type="sequence variant" id="VAR_080612" description="In NEDMIAL; changed localization to stress granules; decreased RNA-dependent ATPase activity; by inducing the formation of stress granules probably indirectly decreases global protein synthesis; dbSNP:rs1060499733." evidence="10 11">
    <original>H</original>
    <variation>R</variation>
    <location>
        <position position="562"/>
    </location>
</feature>
<feature type="sequence variant" id="VAR_080613" description="In NEDMIAL; changed localization to stress granules; decreased RNA-dependent ATPase activity; by inducing the formation of stress granules probably indirectly decreases global protein synthesis; dbSNP:rs1553706775." evidence="11">
    <original>G</original>
    <variation>D</variation>
    <location>
        <position position="781"/>
    </location>
</feature>
<feature type="sequence variant" id="VAR_080614" description="In NEDMIAL; changed localization to stress granules; decreased RNA-dependent ATPase activity; by inducing the formation of stress granules probably indirectly decreases global protein synthesis; dbSNP:rs753242774." evidence="10 11">
    <original>R</original>
    <variation>W</variation>
    <location>
        <position position="782"/>
    </location>
</feature>
<feature type="sequence variant" id="VAR_080615" description="In NEDMIAL; changed localization to stress granules; decreased RNA-dependent ATPase activity; by inducing the formation of stress granules probably indirectly decreases global protein synthesis; dbSNP:rs1085307451." evidence="11">
    <original>R</original>
    <variation>C</variation>
    <location>
        <position position="785"/>
    </location>
</feature>
<feature type="sequence variant" id="VAR_080616" description="In NEDMIAL; changed localization to stress granules; decreased RNA-dependent ATPase activity; by inducing the formation of stress granules probably indirectly decreases global protein synthesis; dbSNP:rs1553706799." evidence="11">
    <original>R</original>
    <variation>H</variation>
    <location>
        <position position="785"/>
    </location>
</feature>
<feature type="sequence conflict" description="In Ref. 2; BAF83955." evidence="14" ref="2">
    <original>I</original>
    <variation>T</variation>
    <location>
        <position position="557"/>
    </location>
</feature>
<feature type="sequence conflict" description="In Ref. 3; AAH14237." evidence="14" ref="3">
    <original>R</original>
    <variation>W</variation>
    <location>
        <position position="1136"/>
    </location>
</feature>
<feature type="turn" evidence="17">
    <location>
        <begin position="47"/>
        <end position="49"/>
    </location>
</feature>
<feature type="helix" evidence="17">
    <location>
        <begin position="53"/>
        <end position="64"/>
    </location>
</feature>
<feature type="helix" evidence="17">
    <location>
        <begin position="67"/>
        <end position="73"/>
    </location>
</feature>
<feature type="strand" evidence="17">
    <location>
        <begin position="74"/>
        <end position="78"/>
    </location>
</feature>
<feature type="strand" evidence="17">
    <location>
        <begin position="81"/>
        <end position="91"/>
    </location>
</feature>
<feature type="strand" evidence="17">
    <location>
        <begin position="93"/>
        <end position="95"/>
    </location>
</feature>
<feature type="strand" evidence="17">
    <location>
        <begin position="97"/>
        <end position="105"/>
    </location>
</feature>
<feature type="helix" evidence="17">
    <location>
        <begin position="106"/>
        <end position="124"/>
    </location>
</feature>
<feature type="helix" evidence="17">
    <location>
        <begin position="136"/>
        <end position="144"/>
    </location>
</feature>
<feature type="modified residue" description="Phosphoserine" evidence="15">
    <location sequence="Q7L2E3-2">
        <position position="15"/>
    </location>
</feature>
<reference key="1">
    <citation type="journal article" date="1998" name="DNA Res.">
        <title>Prediction of the coding sequences of unidentified human genes. XII. The complete sequences of 100 new cDNA clones from brain which code for large proteins in vitro.</title>
        <authorList>
            <person name="Nagase T."/>
            <person name="Ishikawa K."/>
            <person name="Suyama M."/>
            <person name="Kikuno R."/>
            <person name="Hirosawa M."/>
            <person name="Miyajima N."/>
            <person name="Tanaka A."/>
            <person name="Kotani H."/>
            <person name="Nomura N."/>
            <person name="Ohara O."/>
        </authorList>
    </citation>
    <scope>NUCLEOTIDE SEQUENCE [LARGE SCALE MRNA] (ISOFORM 1)</scope>
    <source>
        <tissue>Brain</tissue>
    </source>
</reference>
<reference key="2">
    <citation type="journal article" date="2004" name="Nat. Genet.">
        <title>Complete sequencing and characterization of 21,243 full-length human cDNAs.</title>
        <authorList>
            <person name="Ota T."/>
            <person name="Suzuki Y."/>
            <person name="Nishikawa T."/>
            <person name="Otsuki T."/>
            <person name="Sugiyama T."/>
            <person name="Irie R."/>
            <person name="Wakamatsu A."/>
            <person name="Hayashi K."/>
            <person name="Sato H."/>
            <person name="Nagai K."/>
            <person name="Kimura K."/>
            <person name="Makita H."/>
            <person name="Sekine M."/>
            <person name="Obayashi M."/>
            <person name="Nishi T."/>
            <person name="Shibahara T."/>
            <person name="Tanaka T."/>
            <person name="Ishii S."/>
            <person name="Yamamoto J."/>
            <person name="Saito K."/>
            <person name="Kawai Y."/>
            <person name="Isono Y."/>
            <person name="Nakamura Y."/>
            <person name="Nagahari K."/>
            <person name="Murakami K."/>
            <person name="Yasuda T."/>
            <person name="Iwayanagi T."/>
            <person name="Wagatsuma M."/>
            <person name="Shiratori A."/>
            <person name="Sudo H."/>
            <person name="Hosoiri T."/>
            <person name="Kaku Y."/>
            <person name="Kodaira H."/>
            <person name="Kondo H."/>
            <person name="Sugawara M."/>
            <person name="Takahashi M."/>
            <person name="Kanda K."/>
            <person name="Yokoi T."/>
            <person name="Furuya T."/>
            <person name="Kikkawa E."/>
            <person name="Omura Y."/>
            <person name="Abe K."/>
            <person name="Kamihara K."/>
            <person name="Katsuta N."/>
            <person name="Sato K."/>
            <person name="Tanikawa M."/>
            <person name="Yamazaki M."/>
            <person name="Ninomiya K."/>
            <person name="Ishibashi T."/>
            <person name="Yamashita H."/>
            <person name="Murakawa K."/>
            <person name="Fujimori K."/>
            <person name="Tanai H."/>
            <person name="Kimata M."/>
            <person name="Watanabe M."/>
            <person name="Hiraoka S."/>
            <person name="Chiba Y."/>
            <person name="Ishida S."/>
            <person name="Ono Y."/>
            <person name="Takiguchi S."/>
            <person name="Watanabe S."/>
            <person name="Yosida M."/>
            <person name="Hotuta T."/>
            <person name="Kusano J."/>
            <person name="Kanehori K."/>
            <person name="Takahashi-Fujii A."/>
            <person name="Hara H."/>
            <person name="Tanase T.-O."/>
            <person name="Nomura Y."/>
            <person name="Togiya S."/>
            <person name="Komai F."/>
            <person name="Hara R."/>
            <person name="Takeuchi K."/>
            <person name="Arita M."/>
            <person name="Imose N."/>
            <person name="Musashino K."/>
            <person name="Yuuki H."/>
            <person name="Oshima A."/>
            <person name="Sasaki N."/>
            <person name="Aotsuka S."/>
            <person name="Yoshikawa Y."/>
            <person name="Matsunawa H."/>
            <person name="Ichihara T."/>
            <person name="Shiohata N."/>
            <person name="Sano S."/>
            <person name="Moriya S."/>
            <person name="Momiyama H."/>
            <person name="Satoh N."/>
            <person name="Takami S."/>
            <person name="Terashima Y."/>
            <person name="Suzuki O."/>
            <person name="Nakagawa S."/>
            <person name="Senoh A."/>
            <person name="Mizoguchi H."/>
            <person name="Goto Y."/>
            <person name="Shimizu F."/>
            <person name="Wakebe H."/>
            <person name="Hishigaki H."/>
            <person name="Watanabe T."/>
            <person name="Sugiyama A."/>
            <person name="Takemoto M."/>
            <person name="Kawakami B."/>
            <person name="Yamazaki M."/>
            <person name="Watanabe K."/>
            <person name="Kumagai A."/>
            <person name="Itakura S."/>
            <person name="Fukuzumi Y."/>
            <person name="Fujimori Y."/>
            <person name="Komiyama M."/>
            <person name="Tashiro H."/>
            <person name="Tanigami A."/>
            <person name="Fujiwara T."/>
            <person name="Ono T."/>
            <person name="Yamada K."/>
            <person name="Fujii Y."/>
            <person name="Ozaki K."/>
            <person name="Hirao M."/>
            <person name="Ohmori Y."/>
            <person name="Kawabata A."/>
            <person name="Hikiji T."/>
            <person name="Kobatake N."/>
            <person name="Inagaki H."/>
            <person name="Ikema Y."/>
            <person name="Okamoto S."/>
            <person name="Okitani R."/>
            <person name="Kawakami T."/>
            <person name="Noguchi S."/>
            <person name="Itoh T."/>
            <person name="Shigeta K."/>
            <person name="Senba T."/>
            <person name="Matsumura K."/>
            <person name="Nakajima Y."/>
            <person name="Mizuno T."/>
            <person name="Morinaga M."/>
            <person name="Sasaki M."/>
            <person name="Togashi T."/>
            <person name="Oyama M."/>
            <person name="Hata H."/>
            <person name="Watanabe M."/>
            <person name="Komatsu T."/>
            <person name="Mizushima-Sugano J."/>
            <person name="Satoh T."/>
            <person name="Shirai Y."/>
            <person name="Takahashi Y."/>
            <person name="Nakagawa K."/>
            <person name="Okumura K."/>
            <person name="Nagase T."/>
            <person name="Nomura N."/>
            <person name="Kikuchi H."/>
            <person name="Masuho Y."/>
            <person name="Yamashita R."/>
            <person name="Nakai K."/>
            <person name="Yada T."/>
            <person name="Nakamura Y."/>
            <person name="Ohara O."/>
            <person name="Isogai T."/>
            <person name="Sugano S."/>
        </authorList>
    </citation>
    <scope>NUCLEOTIDE SEQUENCE [LARGE SCALE MRNA] (ISOFORMS 2 AND 3)</scope>
    <source>
        <tissue>Placenta</tissue>
        <tissue>Teratocarcinoma</tissue>
    </source>
</reference>
<reference key="3">
    <citation type="journal article" date="2004" name="Genome Res.">
        <title>The status, quality, and expansion of the NIH full-length cDNA project: the Mammalian Gene Collection (MGC).</title>
        <authorList>
            <consortium name="The MGC Project Team"/>
        </authorList>
    </citation>
    <scope>NUCLEOTIDE SEQUENCE [LARGE SCALE MRNA] (ISOFORMS 1 AND 3)</scope>
    <source>
        <tissue>Brain</tissue>
        <tissue>Lymph</tissue>
        <tissue>Uterus</tissue>
    </source>
</reference>
<reference key="4">
    <citation type="journal article" date="2006" name="J. Biol. Chem.">
        <title>Human mitochondrial DNA nucleoids are linked to protein folding machinery and metabolic enzymes at the mitochondrial inner membrane.</title>
        <authorList>
            <person name="Wang Y."/>
            <person name="Bogenhagen D.F."/>
        </authorList>
    </citation>
    <scope>SUBUNIT</scope>
    <scope>IDENTIFICATION BY MASS SPECTROMETRY</scope>
    <scope>SUBCELLULAR LOCATION</scope>
</reference>
<reference key="5">
    <citation type="journal article" date="2007" name="EMBO Rep.">
        <title>Proteomic and functional analysis of Argonaute-containing mRNA-protein complexes in human cells.</title>
        <authorList>
            <person name="Hoeck J."/>
            <person name="Weinmann L."/>
            <person name="Ender C."/>
            <person name="Ruedel S."/>
            <person name="Kremmer E."/>
            <person name="Raabe M."/>
            <person name="Urlaub H."/>
            <person name="Meister G."/>
        </authorList>
    </citation>
    <scope>INTERACTION WITH AGO1 AND AGO2</scope>
</reference>
<reference key="6">
    <citation type="journal article" date="2008" name="J. Biol. Chem.">
        <title>The layered structure of human mitochondrial DNA nucleoids.</title>
        <authorList>
            <person name="Bogenhagen D.F."/>
            <person name="Rousseau D."/>
            <person name="Burke S."/>
        </authorList>
    </citation>
    <scope>SUBCELLULAR LOCATION</scope>
    <scope>ASSOCIATION WITH MITOCHONDRIAL DNA</scope>
    <scope>IDENTIFICATION BY MASS SPECTROMETRY</scope>
</reference>
<reference key="7">
    <citation type="journal article" date="2008" name="J. Proteome Res.">
        <title>Combining protein-based IMAC, peptide-based IMAC, and MudPIT for efficient phosphoproteomic analysis.</title>
        <authorList>
            <person name="Cantin G.T."/>
            <person name="Yi W."/>
            <person name="Lu B."/>
            <person name="Park S.K."/>
            <person name="Xu T."/>
            <person name="Lee J.-D."/>
            <person name="Yates J.R. III"/>
        </authorList>
    </citation>
    <scope>PHOSPHORYLATION [LARGE SCALE ANALYSIS] AT SER-15 (ISOFORM 2)</scope>
    <scope>IDENTIFICATION BY MASS SPECTROMETRY [LARGE SCALE ANALYSIS]</scope>
    <source>
        <tissue>Cervix carcinoma</tissue>
    </source>
</reference>
<reference key="8">
    <citation type="journal article" date="2008" name="Proc. Natl. Acad. Sci. U.S.A.">
        <title>A quantitative atlas of mitotic phosphorylation.</title>
        <authorList>
            <person name="Dephoure N."/>
            <person name="Zhou C."/>
            <person name="Villen J."/>
            <person name="Beausoleil S.A."/>
            <person name="Bakalarski C.E."/>
            <person name="Elledge S.J."/>
            <person name="Gygi S.P."/>
        </authorList>
    </citation>
    <scope>IDENTIFICATION BY MASS SPECTROMETRY [LARGE SCALE ANALYSIS]</scope>
    <source>
        <tissue>Cervix carcinoma</tissue>
    </source>
</reference>
<reference key="9">
    <citation type="journal article" date="2009" name="Anal. Chem.">
        <title>Lys-N and trypsin cover complementary parts of the phosphoproteome in a refined SCX-based approach.</title>
        <authorList>
            <person name="Gauci S."/>
            <person name="Helbig A.O."/>
            <person name="Slijper M."/>
            <person name="Krijgsveld J."/>
            <person name="Heck A.J."/>
            <person name="Mohammed S."/>
        </authorList>
    </citation>
    <scope>IDENTIFICATION BY MASS SPECTROMETRY [LARGE SCALE ANALYSIS]</scope>
</reference>
<reference key="10">
    <citation type="journal article" date="2009" name="Sci. Signal.">
        <title>Quantitative phosphoproteomic analysis of T cell receptor signaling reveals system-wide modulation of protein-protein interactions.</title>
        <authorList>
            <person name="Mayya V."/>
            <person name="Lundgren D.H."/>
            <person name="Hwang S.-I."/>
            <person name="Rezaul K."/>
            <person name="Wu L."/>
            <person name="Eng J.K."/>
            <person name="Rodionov V."/>
            <person name="Han D.K."/>
        </authorList>
    </citation>
    <scope>IDENTIFICATION BY MASS SPECTROMETRY [LARGE SCALE ANALYSIS]</scope>
    <source>
        <tissue>Leukemic T-cell</tissue>
    </source>
</reference>
<reference key="11">
    <citation type="journal article" date="2011" name="BMC Syst. Biol.">
        <title>Initial characterization of the human central proteome.</title>
        <authorList>
            <person name="Burkard T.R."/>
            <person name="Planyavsky M."/>
            <person name="Kaupe I."/>
            <person name="Breitwieser F.P."/>
            <person name="Buerckstuemmer T."/>
            <person name="Bennett K.L."/>
            <person name="Superti-Furga G."/>
            <person name="Colinge J."/>
        </authorList>
    </citation>
    <scope>IDENTIFICATION BY MASS SPECTROMETRY [LARGE SCALE ANALYSIS]</scope>
</reference>
<reference key="12">
    <citation type="journal article" date="2013" name="J. Proteome Res.">
        <title>Toward a comprehensive characterization of a human cancer cell phosphoproteome.</title>
        <authorList>
            <person name="Zhou H."/>
            <person name="Di Palma S."/>
            <person name="Preisinger C."/>
            <person name="Peng M."/>
            <person name="Polat A.N."/>
            <person name="Heck A.J."/>
            <person name="Mohammed S."/>
        </authorList>
    </citation>
    <scope>PHOSPHORYLATION [LARGE SCALE ANALYSIS] AT SER-6 AND SER-380</scope>
    <scope>IDENTIFICATION BY MASS SPECTROMETRY [LARGE SCALE ANALYSIS]</scope>
    <source>
        <tissue>Cervix carcinoma</tissue>
        <tissue>Erythroleukemia</tissue>
    </source>
</reference>
<reference key="13">
    <citation type="journal article" date="2014" name="J. Proteomics">
        <title>An enzyme assisted RP-RPLC approach for in-depth analysis of human liver phosphoproteome.</title>
        <authorList>
            <person name="Bian Y."/>
            <person name="Song C."/>
            <person name="Cheng K."/>
            <person name="Dong M."/>
            <person name="Wang F."/>
            <person name="Huang J."/>
            <person name="Sun D."/>
            <person name="Wang L."/>
            <person name="Ye M."/>
            <person name="Zou H."/>
        </authorList>
    </citation>
    <scope>IDENTIFICATION BY MASS SPECTROMETRY [LARGE SCALE ANALYSIS]</scope>
    <source>
        <tissue>Liver</tissue>
    </source>
</reference>
<reference key="14">
    <citation type="journal article" date="2015" name="Cell Rep.">
        <title>Mitochondrial RNA granules are centers for post-transcriptional RNA processing and ribosome biogenesis.</title>
        <authorList>
            <person name="Antonicka H."/>
            <person name="Shoubridge E.A."/>
        </authorList>
    </citation>
    <scope>FUNCTION</scope>
    <scope>IDENTIFICATION IN A COMPLEX WITH GRSF1; DDX28; FASTKD2 AND FASTKD5</scope>
    <scope>SUBCELLULAR LOCATION</scope>
    <scope>IDENTIFICATION BY MASS SPECTROMETRY</scope>
</reference>
<reference key="15">
    <citation type="journal article" date="2015" name="Proteomics">
        <title>N-terminome analysis of the human mitochondrial proteome.</title>
        <authorList>
            <person name="Vaca Jacome A.S."/>
            <person name="Rabilloud T."/>
            <person name="Schaeffer-Reiss C."/>
            <person name="Rompais M."/>
            <person name="Ayoub D."/>
            <person name="Lane L."/>
            <person name="Bairoch A."/>
            <person name="Van Dorsselaer A."/>
            <person name="Carapito C."/>
        </authorList>
    </citation>
    <scope>IDENTIFICATION BY MASS SPECTROMETRY [LARGE SCALE ANALYSIS]</scope>
</reference>
<reference key="16">
    <citation type="submission" date="2006-06" db="PDB data bank">
        <title>Solution structure of the double-stranded RNA binding domain in KIAA0890 protein.</title>
        <authorList>
            <consortium name="RIKEN structural genomics initiative (RSGI)"/>
        </authorList>
    </citation>
    <scope>STRUCTURE BY NMR OF 42-148</scope>
</reference>
<reference key="17">
    <citation type="journal article" date="2017" name="Am. J. Hum. Genet.">
        <title>De Novo Missense Mutations in DHX30 Impair Global Translation and Cause a Neurodevelopmental Disorder.</title>
        <authorList>
            <consortium name="DDD study"/>
            <consortium name="C4RCD Research Group"/>
            <person name="Lessel D."/>
            <person name="Schob C."/>
            <person name="Kuery S."/>
            <person name="Reijnders M.R.F."/>
            <person name="Harel T."/>
            <person name="Eldomery M.K."/>
            <person name="Coban-Akdemir Z."/>
            <person name="Denecke J."/>
            <person name="Edvardson S."/>
            <person name="Colin E."/>
            <person name="Stegmann A.P.A."/>
            <person name="Gerkes E.H."/>
            <person name="Tessarech M."/>
            <person name="Bonneau D."/>
            <person name="Barth M."/>
            <person name="Besnard T."/>
            <person name="Cogne B."/>
            <person name="Revah-Politi A."/>
            <person name="Strom T.M."/>
            <person name="Rosenfeld J.A."/>
            <person name="Yang Y."/>
            <person name="Posey J.E."/>
            <person name="Immken L."/>
            <person name="Oundjian N."/>
            <person name="Helbig K.L."/>
            <person name="Meeks N."/>
            <person name="Zegar K."/>
            <person name="Morton J."/>
            <person name="Schieving J.H."/>
            <person name="Claasen A."/>
            <person name="Huentelman M."/>
            <person name="Narayanan V."/>
            <person name="Ramsey K."/>
            <person name="Brunner H.G."/>
            <person name="Elpeleg O."/>
            <person name="Mercier S."/>
            <person name="Bezieau S."/>
            <person name="Kubisch C."/>
            <person name="Kleefstra T."/>
            <person name="Kindler S."/>
            <person name="Lupski J.R."/>
            <person name="Kreienkamp H.J."/>
        </authorList>
    </citation>
    <scope>INVOLVEMENT IN NEDMIAL</scope>
    <scope>VARIANTS NEDMIAL HIS-493; ARG-562; ASP-781; TRP-782; CYS-785 AND HIS-785</scope>
    <scope>CHARACTERIZATION OF VARIANTS NEDMIAL HIS-493; ARG-562; ASP-781; TRP-782; CYS-785 AND HIS-785</scope>
    <scope>FUNCTION</scope>
    <scope>CATALYTIC ACTIVITY</scope>
    <scope>SUBCELLULAR LOCATION</scope>
</reference>
<reference key="18">
    <citation type="journal article" date="2017" name="Genome Med.">
        <title>Lessons learned from additional research analyses of unsolved clinical exome cases.</title>
        <authorList>
            <person name="Eldomery M.K."/>
            <person name="Coban-Akdemir Z."/>
            <person name="Harel T."/>
            <person name="Rosenfeld J.A."/>
            <person name="Gambin T."/>
            <person name="Stray-Pedersen A."/>
            <person name="Kuery S."/>
            <person name="Mercier S."/>
            <person name="Lessel D."/>
            <person name="Denecke J."/>
            <person name="Wiszniewski W."/>
            <person name="Penney S."/>
            <person name="Liu P."/>
            <person name="Bi W."/>
            <person name="Lalani S.R."/>
            <person name="Schaaf C.P."/>
            <person name="Wangler M.F."/>
            <person name="Bacino C.A."/>
            <person name="Lewis R.A."/>
            <person name="Potocki L."/>
            <person name="Graham B.H."/>
            <person name="Belmont J.W."/>
            <person name="Scaglia F."/>
            <person name="Orange J.S."/>
            <person name="Jhangiani S.N."/>
            <person name="Chiang T."/>
            <person name="Doddapaneni H."/>
            <person name="Hu J."/>
            <person name="Muzny D.M."/>
            <person name="Xia F."/>
            <person name="Beaudet A.L."/>
            <person name="Boerwinkle E."/>
            <person name="Eng C.M."/>
            <person name="Plon S.E."/>
            <person name="Sutton V.R."/>
            <person name="Gibbs R.A."/>
            <person name="Posey J.E."/>
            <person name="Yang Y."/>
            <person name="Lupski J.R."/>
        </authorList>
    </citation>
    <scope>VARIANTS NEDMIAL HIS-493; ARG-562 AND TRP-782</scope>
</reference>
<proteinExistence type="evidence at protein level"/>